<organism>
    <name type="scientific">Lactobacillus johnsonii (strain CNCM I-12250 / La1 / NCC 533)</name>
    <dbReference type="NCBI Taxonomy" id="257314"/>
    <lineage>
        <taxon>Bacteria</taxon>
        <taxon>Bacillati</taxon>
        <taxon>Bacillota</taxon>
        <taxon>Bacilli</taxon>
        <taxon>Lactobacillales</taxon>
        <taxon>Lactobacillaceae</taxon>
        <taxon>Lactobacillus</taxon>
    </lineage>
</organism>
<comment type="function">
    <text evidence="1">Binds together with bS18 to 16S ribosomal RNA.</text>
</comment>
<comment type="similarity">
    <text evidence="1">Belongs to the bacterial ribosomal protein bS6 family.</text>
</comment>
<feature type="chain" id="PRO_0000176779" description="Small ribosomal subunit protein bS6">
    <location>
        <begin position="1"/>
        <end position="98"/>
    </location>
</feature>
<name>RS6_LACJO</name>
<protein>
    <recommendedName>
        <fullName evidence="1">Small ribosomal subunit protein bS6</fullName>
    </recommendedName>
    <alternativeName>
        <fullName evidence="2">30S ribosomal protein S6</fullName>
    </alternativeName>
</protein>
<dbReference type="EMBL" id="AE017198">
    <property type="protein sequence ID" value="AAS07987.1"/>
    <property type="molecule type" value="Genomic_DNA"/>
</dbReference>
<dbReference type="RefSeq" id="WP_004896331.1">
    <property type="nucleotide sequence ID" value="NC_005362.1"/>
</dbReference>
<dbReference type="SMR" id="Q74M28"/>
<dbReference type="GeneID" id="83569442"/>
<dbReference type="KEGG" id="ljo:LJ_0006"/>
<dbReference type="eggNOG" id="COG0360">
    <property type="taxonomic scope" value="Bacteria"/>
</dbReference>
<dbReference type="HOGENOM" id="CLU_113441_5_3_9"/>
<dbReference type="Proteomes" id="UP000000581">
    <property type="component" value="Chromosome"/>
</dbReference>
<dbReference type="GO" id="GO:0005737">
    <property type="term" value="C:cytoplasm"/>
    <property type="evidence" value="ECO:0007669"/>
    <property type="project" value="UniProtKB-ARBA"/>
</dbReference>
<dbReference type="GO" id="GO:1990904">
    <property type="term" value="C:ribonucleoprotein complex"/>
    <property type="evidence" value="ECO:0007669"/>
    <property type="project" value="UniProtKB-KW"/>
</dbReference>
<dbReference type="GO" id="GO:0005840">
    <property type="term" value="C:ribosome"/>
    <property type="evidence" value="ECO:0007669"/>
    <property type="project" value="UniProtKB-KW"/>
</dbReference>
<dbReference type="GO" id="GO:0070181">
    <property type="term" value="F:small ribosomal subunit rRNA binding"/>
    <property type="evidence" value="ECO:0007669"/>
    <property type="project" value="TreeGrafter"/>
</dbReference>
<dbReference type="GO" id="GO:0003735">
    <property type="term" value="F:structural constituent of ribosome"/>
    <property type="evidence" value="ECO:0007669"/>
    <property type="project" value="InterPro"/>
</dbReference>
<dbReference type="GO" id="GO:0006412">
    <property type="term" value="P:translation"/>
    <property type="evidence" value="ECO:0007669"/>
    <property type="project" value="UniProtKB-UniRule"/>
</dbReference>
<dbReference type="CDD" id="cd00473">
    <property type="entry name" value="bS6"/>
    <property type="match status" value="1"/>
</dbReference>
<dbReference type="Gene3D" id="3.30.70.60">
    <property type="match status" value="1"/>
</dbReference>
<dbReference type="HAMAP" id="MF_00360">
    <property type="entry name" value="Ribosomal_bS6"/>
    <property type="match status" value="1"/>
</dbReference>
<dbReference type="InterPro" id="IPR000529">
    <property type="entry name" value="Ribosomal_bS6"/>
</dbReference>
<dbReference type="InterPro" id="IPR035980">
    <property type="entry name" value="Ribosomal_bS6_sf"/>
</dbReference>
<dbReference type="InterPro" id="IPR020814">
    <property type="entry name" value="Ribosomal_S6_plastid/chlpt"/>
</dbReference>
<dbReference type="InterPro" id="IPR014717">
    <property type="entry name" value="Transl_elong_EF1B/ribsomal_bS6"/>
</dbReference>
<dbReference type="NCBIfam" id="TIGR00166">
    <property type="entry name" value="S6"/>
    <property type="match status" value="1"/>
</dbReference>
<dbReference type="PANTHER" id="PTHR21011">
    <property type="entry name" value="MITOCHONDRIAL 28S RIBOSOMAL PROTEIN S6"/>
    <property type="match status" value="1"/>
</dbReference>
<dbReference type="PANTHER" id="PTHR21011:SF1">
    <property type="entry name" value="SMALL RIBOSOMAL SUBUNIT PROTEIN BS6M"/>
    <property type="match status" value="1"/>
</dbReference>
<dbReference type="Pfam" id="PF01250">
    <property type="entry name" value="Ribosomal_S6"/>
    <property type="match status" value="1"/>
</dbReference>
<dbReference type="SUPFAM" id="SSF54995">
    <property type="entry name" value="Ribosomal protein S6"/>
    <property type="match status" value="1"/>
</dbReference>
<sequence>MAKTKYEVTYIIKPDIDEDSKKALIDRFDKVVTDNGAEELESKDWGKRRFAYEIEKYREGTYHIMTFVAENSEPVDEFGRLSRIDNQILRSMTVKLDK</sequence>
<gene>
    <name evidence="1" type="primary">rpsF</name>
    <name type="ordered locus">LJ_0006</name>
</gene>
<proteinExistence type="inferred from homology"/>
<keyword id="KW-0687">Ribonucleoprotein</keyword>
<keyword id="KW-0689">Ribosomal protein</keyword>
<keyword id="KW-0694">RNA-binding</keyword>
<keyword id="KW-0699">rRNA-binding</keyword>
<reference key="1">
    <citation type="journal article" date="2004" name="Proc. Natl. Acad. Sci. U.S.A.">
        <title>The genome sequence of the probiotic intestinal bacterium Lactobacillus johnsonii NCC 533.</title>
        <authorList>
            <person name="Pridmore R.D."/>
            <person name="Berger B."/>
            <person name="Desiere F."/>
            <person name="Vilanova D."/>
            <person name="Barretto C."/>
            <person name="Pittet A.-C."/>
            <person name="Zwahlen M.-C."/>
            <person name="Rouvet M."/>
            <person name="Altermann E."/>
            <person name="Barrangou R."/>
            <person name="Mollet B."/>
            <person name="Mercenier A."/>
            <person name="Klaenhammer T."/>
            <person name="Arigoni F."/>
            <person name="Schell M.A."/>
        </authorList>
    </citation>
    <scope>NUCLEOTIDE SEQUENCE [LARGE SCALE GENOMIC DNA]</scope>
    <source>
        <strain>CNCM I-1225 / La1 / NCC 533</strain>
    </source>
</reference>
<evidence type="ECO:0000255" key="1">
    <source>
        <dbReference type="HAMAP-Rule" id="MF_00360"/>
    </source>
</evidence>
<evidence type="ECO:0000305" key="2"/>
<accession>Q74M28</accession>